<sequence>MSRVCQVTGKRPAVGNNRSHALNATRRRFLPNLHTHRFWVESENRFVTLRLTAKGMRIIDKKGIDAVLADIRARGEKI</sequence>
<gene>
    <name evidence="1" type="primary">rpmB</name>
    <name type="ordered locus">Asuc_0014</name>
</gene>
<protein>
    <recommendedName>
        <fullName evidence="1">Large ribosomal subunit protein bL28</fullName>
    </recommendedName>
    <alternativeName>
        <fullName evidence="3">50S ribosomal protein L28</fullName>
    </alternativeName>
</protein>
<dbReference type="EMBL" id="CP000746">
    <property type="protein sequence ID" value="ABR73396.1"/>
    <property type="molecule type" value="Genomic_DNA"/>
</dbReference>
<dbReference type="RefSeq" id="WP_011201102.1">
    <property type="nucleotide sequence ID" value="NC_009655.1"/>
</dbReference>
<dbReference type="SMR" id="A6VK99"/>
<dbReference type="STRING" id="339671.Asuc_0014"/>
<dbReference type="GeneID" id="93226079"/>
<dbReference type="KEGG" id="asu:Asuc_0014"/>
<dbReference type="eggNOG" id="COG0227">
    <property type="taxonomic scope" value="Bacteria"/>
</dbReference>
<dbReference type="HOGENOM" id="CLU_064548_3_1_6"/>
<dbReference type="OrthoDB" id="9805609at2"/>
<dbReference type="Proteomes" id="UP000001114">
    <property type="component" value="Chromosome"/>
</dbReference>
<dbReference type="GO" id="GO:0022625">
    <property type="term" value="C:cytosolic large ribosomal subunit"/>
    <property type="evidence" value="ECO:0007669"/>
    <property type="project" value="TreeGrafter"/>
</dbReference>
<dbReference type="GO" id="GO:0003735">
    <property type="term" value="F:structural constituent of ribosome"/>
    <property type="evidence" value="ECO:0007669"/>
    <property type="project" value="InterPro"/>
</dbReference>
<dbReference type="GO" id="GO:0006412">
    <property type="term" value="P:translation"/>
    <property type="evidence" value="ECO:0007669"/>
    <property type="project" value="UniProtKB-UniRule"/>
</dbReference>
<dbReference type="FunFam" id="2.30.170.40:FF:000001">
    <property type="entry name" value="50S ribosomal protein L28"/>
    <property type="match status" value="1"/>
</dbReference>
<dbReference type="Gene3D" id="2.30.170.40">
    <property type="entry name" value="Ribosomal protein L28/L24"/>
    <property type="match status" value="1"/>
</dbReference>
<dbReference type="HAMAP" id="MF_00373">
    <property type="entry name" value="Ribosomal_bL28"/>
    <property type="match status" value="1"/>
</dbReference>
<dbReference type="InterPro" id="IPR026569">
    <property type="entry name" value="Ribosomal_bL28"/>
</dbReference>
<dbReference type="InterPro" id="IPR034704">
    <property type="entry name" value="Ribosomal_bL28/bL31-like_sf"/>
</dbReference>
<dbReference type="InterPro" id="IPR001383">
    <property type="entry name" value="Ribosomal_bL28_bact-type"/>
</dbReference>
<dbReference type="InterPro" id="IPR037147">
    <property type="entry name" value="Ribosomal_bL28_sf"/>
</dbReference>
<dbReference type="NCBIfam" id="TIGR00009">
    <property type="entry name" value="L28"/>
    <property type="match status" value="1"/>
</dbReference>
<dbReference type="PANTHER" id="PTHR13528">
    <property type="entry name" value="39S RIBOSOMAL PROTEIN L28, MITOCHONDRIAL"/>
    <property type="match status" value="1"/>
</dbReference>
<dbReference type="PANTHER" id="PTHR13528:SF2">
    <property type="entry name" value="LARGE RIBOSOMAL SUBUNIT PROTEIN BL28M"/>
    <property type="match status" value="1"/>
</dbReference>
<dbReference type="Pfam" id="PF00830">
    <property type="entry name" value="Ribosomal_L28"/>
    <property type="match status" value="1"/>
</dbReference>
<dbReference type="SUPFAM" id="SSF143800">
    <property type="entry name" value="L28p-like"/>
    <property type="match status" value="1"/>
</dbReference>
<name>RL28_ACTSZ</name>
<reference key="1">
    <citation type="journal article" date="2010" name="BMC Genomics">
        <title>A genomic perspective on the potential of Actinobacillus succinogenes for industrial succinate production.</title>
        <authorList>
            <person name="McKinlay J.B."/>
            <person name="Laivenieks M."/>
            <person name="Schindler B.D."/>
            <person name="McKinlay A.A."/>
            <person name="Siddaramappa S."/>
            <person name="Challacombe J.F."/>
            <person name="Lowry S.R."/>
            <person name="Clum A."/>
            <person name="Lapidus A.L."/>
            <person name="Burkhart K.B."/>
            <person name="Harkins V."/>
            <person name="Vieille C."/>
        </authorList>
    </citation>
    <scope>NUCLEOTIDE SEQUENCE [LARGE SCALE GENOMIC DNA]</scope>
    <source>
        <strain>ATCC 55618 / DSM 22257 / CCUG 43843 / 130Z</strain>
    </source>
</reference>
<keyword id="KW-1185">Reference proteome</keyword>
<keyword id="KW-0687">Ribonucleoprotein</keyword>
<keyword id="KW-0689">Ribosomal protein</keyword>
<evidence type="ECO:0000255" key="1">
    <source>
        <dbReference type="HAMAP-Rule" id="MF_00373"/>
    </source>
</evidence>
<evidence type="ECO:0000256" key="2">
    <source>
        <dbReference type="SAM" id="MobiDB-lite"/>
    </source>
</evidence>
<evidence type="ECO:0000305" key="3"/>
<proteinExistence type="inferred from homology"/>
<comment type="similarity">
    <text evidence="1">Belongs to the bacterial ribosomal protein bL28 family.</text>
</comment>
<organism>
    <name type="scientific">Actinobacillus succinogenes (strain ATCC 55618 / DSM 22257 / CCUG 43843 / 130Z)</name>
    <dbReference type="NCBI Taxonomy" id="339671"/>
    <lineage>
        <taxon>Bacteria</taxon>
        <taxon>Pseudomonadati</taxon>
        <taxon>Pseudomonadota</taxon>
        <taxon>Gammaproteobacteria</taxon>
        <taxon>Pasteurellales</taxon>
        <taxon>Pasteurellaceae</taxon>
        <taxon>Actinobacillus</taxon>
    </lineage>
</organism>
<accession>A6VK99</accession>
<feature type="chain" id="PRO_1000072130" description="Large ribosomal subunit protein bL28">
    <location>
        <begin position="1"/>
        <end position="78"/>
    </location>
</feature>
<feature type="region of interest" description="Disordered" evidence="2">
    <location>
        <begin position="1"/>
        <end position="20"/>
    </location>
</feature>